<feature type="chain" id="PRO_0000234368" description="Putative serine/threonine-protein kinase YPL150W">
    <location>
        <begin position="1"/>
        <end position="901"/>
    </location>
</feature>
<feature type="domain" description="Protein kinase" evidence="2">
    <location>
        <begin position="41"/>
        <end position="287"/>
    </location>
</feature>
<feature type="region of interest" description="Disordered" evidence="4">
    <location>
        <begin position="500"/>
        <end position="530"/>
    </location>
</feature>
<feature type="region of interest" description="Disordered" evidence="4">
    <location>
        <begin position="588"/>
        <end position="629"/>
    </location>
</feature>
<feature type="region of interest" description="Disordered" evidence="4">
    <location>
        <begin position="745"/>
        <end position="770"/>
    </location>
</feature>
<feature type="compositionally biased region" description="Low complexity" evidence="4">
    <location>
        <begin position="588"/>
        <end position="599"/>
    </location>
</feature>
<feature type="compositionally biased region" description="Polar residues" evidence="4">
    <location>
        <begin position="600"/>
        <end position="613"/>
    </location>
</feature>
<feature type="compositionally biased region" description="Basic residues" evidence="4">
    <location>
        <begin position="759"/>
        <end position="770"/>
    </location>
</feature>
<feature type="active site" description="Proton acceptor" evidence="2 3">
    <location>
        <position position="157"/>
    </location>
</feature>
<feature type="binding site" evidence="2">
    <location>
        <begin position="47"/>
        <end position="55"/>
    </location>
    <ligand>
        <name>ATP</name>
        <dbReference type="ChEBI" id="CHEBI:30616"/>
    </ligand>
</feature>
<feature type="binding site" evidence="2">
    <location>
        <position position="70"/>
    </location>
    <ligand>
        <name>ATP</name>
        <dbReference type="ChEBI" id="CHEBI:30616"/>
    </ligand>
</feature>
<feature type="modified residue" description="Phosphoserine" evidence="6 9">
    <location>
        <position position="456"/>
    </location>
</feature>
<feature type="modified residue" description="Phosphoserine" evidence="7 8 9">
    <location>
        <position position="533"/>
    </location>
</feature>
<proteinExistence type="evidence at protein level"/>
<organism>
    <name type="scientific">Saccharomyces cerevisiae (strain ATCC 204508 / S288c)</name>
    <name type="common">Baker's yeast</name>
    <dbReference type="NCBI Taxonomy" id="559292"/>
    <lineage>
        <taxon>Eukaryota</taxon>
        <taxon>Fungi</taxon>
        <taxon>Dikarya</taxon>
        <taxon>Ascomycota</taxon>
        <taxon>Saccharomycotina</taxon>
        <taxon>Saccharomycetes</taxon>
        <taxon>Saccharomycetales</taxon>
        <taxon>Saccharomycetaceae</taxon>
        <taxon>Saccharomyces</taxon>
    </lineage>
</organism>
<dbReference type="EC" id="2.7.11.1"/>
<dbReference type="EMBL" id="X96770">
    <property type="protein sequence ID" value="CAA65571.1"/>
    <property type="molecule type" value="Genomic_DNA"/>
</dbReference>
<dbReference type="EMBL" id="Z73506">
    <property type="protein sequence ID" value="CAA97855.1"/>
    <property type="molecule type" value="Genomic_DNA"/>
</dbReference>
<dbReference type="EMBL" id="BK006949">
    <property type="protein sequence ID" value="DAA11285.1"/>
    <property type="molecule type" value="Genomic_DNA"/>
</dbReference>
<dbReference type="PIR" id="S65161">
    <property type="entry name" value="S65161"/>
</dbReference>
<dbReference type="RefSeq" id="NP_015175.1">
    <property type="nucleotide sequence ID" value="NM_001183964.1"/>
</dbReference>
<dbReference type="SMR" id="Q12152"/>
<dbReference type="BioGRID" id="36033">
    <property type="interactions" value="214"/>
</dbReference>
<dbReference type="DIP" id="DIP-3996N"/>
<dbReference type="FunCoup" id="Q12152">
    <property type="interactions" value="330"/>
</dbReference>
<dbReference type="IntAct" id="Q12152">
    <property type="interactions" value="32"/>
</dbReference>
<dbReference type="MINT" id="Q12152"/>
<dbReference type="STRING" id="4932.YPL150W"/>
<dbReference type="GlyGen" id="Q12152">
    <property type="glycosylation" value="1 site, 1 O-linked glycan (1 site)"/>
</dbReference>
<dbReference type="iPTMnet" id="Q12152"/>
<dbReference type="PaxDb" id="4932-YPL150W"/>
<dbReference type="PeptideAtlas" id="Q12152"/>
<dbReference type="EnsemblFungi" id="YPL150W_mRNA">
    <property type="protein sequence ID" value="YPL150W"/>
    <property type="gene ID" value="YPL150W"/>
</dbReference>
<dbReference type="GeneID" id="855953"/>
<dbReference type="KEGG" id="sce:YPL150W"/>
<dbReference type="AGR" id="SGD:S000006071"/>
<dbReference type="SGD" id="S000006071">
    <property type="gene designation" value="YPL150W"/>
</dbReference>
<dbReference type="VEuPathDB" id="FungiDB:YPL150W"/>
<dbReference type="eggNOG" id="KOG0583">
    <property type="taxonomic scope" value="Eukaryota"/>
</dbReference>
<dbReference type="GeneTree" id="ENSGT00940000154889"/>
<dbReference type="HOGENOM" id="CLU_011780_0_1_1"/>
<dbReference type="InParanoid" id="Q12152"/>
<dbReference type="OMA" id="FYHRQFD"/>
<dbReference type="OrthoDB" id="942095at2759"/>
<dbReference type="BioCyc" id="YEAST:G3O-34047-MONOMER"/>
<dbReference type="BioGRID-ORCS" id="855953">
    <property type="hits" value="0 hits in 13 CRISPR screens"/>
</dbReference>
<dbReference type="PRO" id="PR:Q12152"/>
<dbReference type="Proteomes" id="UP000002311">
    <property type="component" value="Chromosome XVI"/>
</dbReference>
<dbReference type="RNAct" id="Q12152">
    <property type="molecule type" value="protein"/>
</dbReference>
<dbReference type="GO" id="GO:0036464">
    <property type="term" value="C:cytoplasmic ribonucleoprotein granule"/>
    <property type="evidence" value="ECO:0000314"/>
    <property type="project" value="SGD"/>
</dbReference>
<dbReference type="GO" id="GO:0005524">
    <property type="term" value="F:ATP binding"/>
    <property type="evidence" value="ECO:0007669"/>
    <property type="project" value="UniProtKB-KW"/>
</dbReference>
<dbReference type="GO" id="GO:0004672">
    <property type="term" value="F:protein kinase activity"/>
    <property type="evidence" value="ECO:0007005"/>
    <property type="project" value="SGD"/>
</dbReference>
<dbReference type="GO" id="GO:0106310">
    <property type="term" value="F:protein serine kinase activity"/>
    <property type="evidence" value="ECO:0007669"/>
    <property type="project" value="RHEA"/>
</dbReference>
<dbReference type="GO" id="GO:0004674">
    <property type="term" value="F:protein serine/threonine kinase activity"/>
    <property type="evidence" value="ECO:0000318"/>
    <property type="project" value="GO_Central"/>
</dbReference>
<dbReference type="CDD" id="cd14003">
    <property type="entry name" value="STKc_AMPK-like"/>
    <property type="match status" value="1"/>
</dbReference>
<dbReference type="FunFam" id="1.10.510.10:FF:000650">
    <property type="entry name" value="Serine/threonine-protein kinase ppk16"/>
    <property type="match status" value="1"/>
</dbReference>
<dbReference type="Gene3D" id="1.10.510.10">
    <property type="entry name" value="Transferase(Phosphotransferase) domain 1"/>
    <property type="match status" value="1"/>
</dbReference>
<dbReference type="InterPro" id="IPR030616">
    <property type="entry name" value="Aur-like"/>
</dbReference>
<dbReference type="InterPro" id="IPR011009">
    <property type="entry name" value="Kinase-like_dom_sf"/>
</dbReference>
<dbReference type="InterPro" id="IPR000719">
    <property type="entry name" value="Prot_kinase_dom"/>
</dbReference>
<dbReference type="InterPro" id="IPR008271">
    <property type="entry name" value="Ser/Thr_kinase_AS"/>
</dbReference>
<dbReference type="PANTHER" id="PTHR24350">
    <property type="entry name" value="SERINE/THREONINE-PROTEIN KINASE IAL-RELATED"/>
    <property type="match status" value="1"/>
</dbReference>
<dbReference type="Pfam" id="PF00069">
    <property type="entry name" value="Pkinase"/>
    <property type="match status" value="1"/>
</dbReference>
<dbReference type="SMART" id="SM00220">
    <property type="entry name" value="S_TKc"/>
    <property type="match status" value="1"/>
</dbReference>
<dbReference type="SUPFAM" id="SSF56112">
    <property type="entry name" value="Protein kinase-like (PK-like)"/>
    <property type="match status" value="1"/>
</dbReference>
<dbReference type="PROSITE" id="PS50011">
    <property type="entry name" value="PROTEIN_KINASE_DOM"/>
    <property type="match status" value="1"/>
</dbReference>
<dbReference type="PROSITE" id="PS00108">
    <property type="entry name" value="PROTEIN_KINASE_ST"/>
    <property type="match status" value="1"/>
</dbReference>
<comment type="function">
    <text evidence="1">Putative serine/threonine-protein kinase.</text>
</comment>
<comment type="catalytic activity">
    <reaction>
        <text>L-seryl-[protein] + ATP = O-phospho-L-seryl-[protein] + ADP + H(+)</text>
        <dbReference type="Rhea" id="RHEA:17989"/>
        <dbReference type="Rhea" id="RHEA-COMP:9863"/>
        <dbReference type="Rhea" id="RHEA-COMP:11604"/>
        <dbReference type="ChEBI" id="CHEBI:15378"/>
        <dbReference type="ChEBI" id="CHEBI:29999"/>
        <dbReference type="ChEBI" id="CHEBI:30616"/>
        <dbReference type="ChEBI" id="CHEBI:83421"/>
        <dbReference type="ChEBI" id="CHEBI:456216"/>
        <dbReference type="EC" id="2.7.11.1"/>
    </reaction>
</comment>
<comment type="catalytic activity">
    <reaction>
        <text>L-threonyl-[protein] + ATP = O-phospho-L-threonyl-[protein] + ADP + H(+)</text>
        <dbReference type="Rhea" id="RHEA:46608"/>
        <dbReference type="Rhea" id="RHEA-COMP:11060"/>
        <dbReference type="Rhea" id="RHEA-COMP:11605"/>
        <dbReference type="ChEBI" id="CHEBI:15378"/>
        <dbReference type="ChEBI" id="CHEBI:30013"/>
        <dbReference type="ChEBI" id="CHEBI:30616"/>
        <dbReference type="ChEBI" id="CHEBI:61977"/>
        <dbReference type="ChEBI" id="CHEBI:456216"/>
        <dbReference type="EC" id="2.7.11.1"/>
    </reaction>
</comment>
<comment type="interaction">
    <interactant intactId="EBI-37557">
        <id>Q12152</id>
    </interactant>
    <interactant intactId="EBI-11850">
        <id>P25293</id>
        <label>NAP1</label>
    </interactant>
    <organismsDiffer>false</organismsDiffer>
    <experiments>3</experiments>
</comment>
<comment type="induction">
    <text evidence="5">By methyl methanesulfonate (MMS).</text>
</comment>
<comment type="similarity">
    <text evidence="2">Belongs to the protein kinase superfamily. Ser/Thr protein kinase family.</text>
</comment>
<name>YP150_YEAST</name>
<keyword id="KW-0067">ATP-binding</keyword>
<keyword id="KW-0418">Kinase</keyword>
<keyword id="KW-0547">Nucleotide-binding</keyword>
<keyword id="KW-0597">Phosphoprotein</keyword>
<keyword id="KW-1185">Reference proteome</keyword>
<keyword id="KW-0723">Serine/threonine-protein kinase</keyword>
<keyword id="KW-0808">Transferase</keyword>
<evidence type="ECO:0000250" key="1"/>
<evidence type="ECO:0000255" key="2">
    <source>
        <dbReference type="PROSITE-ProRule" id="PRU00159"/>
    </source>
</evidence>
<evidence type="ECO:0000255" key="3">
    <source>
        <dbReference type="PROSITE-ProRule" id="PRU10027"/>
    </source>
</evidence>
<evidence type="ECO:0000256" key="4">
    <source>
        <dbReference type="SAM" id="MobiDB-lite"/>
    </source>
</evidence>
<evidence type="ECO:0000269" key="5">
    <source>
    </source>
</evidence>
<evidence type="ECO:0007744" key="6">
    <source>
    </source>
</evidence>
<evidence type="ECO:0007744" key="7">
    <source>
    </source>
</evidence>
<evidence type="ECO:0007744" key="8">
    <source>
    </source>
</evidence>
<evidence type="ECO:0007744" key="9">
    <source>
    </source>
</evidence>
<reference key="1">
    <citation type="journal article" date="1996" name="Yeast">
        <title>The sequence of 55 kb on the left arm of yeast chromosome XVI identifies a small nuclear RNA, a new putative protein kinase and two new putative regulators.</title>
        <authorList>
            <person name="Purnelle B."/>
            <person name="Coster F."/>
            <person name="Goffeau A."/>
        </authorList>
    </citation>
    <scope>NUCLEOTIDE SEQUENCE [GENOMIC DNA]</scope>
    <source>
        <strain>ATCC 204511 / S288c / AB972</strain>
    </source>
</reference>
<reference key="2">
    <citation type="journal article" date="1997" name="Nature">
        <title>The nucleotide sequence of Saccharomyces cerevisiae chromosome XVI.</title>
        <authorList>
            <person name="Bussey H."/>
            <person name="Storms R.K."/>
            <person name="Ahmed A."/>
            <person name="Albermann K."/>
            <person name="Allen E."/>
            <person name="Ansorge W."/>
            <person name="Araujo R."/>
            <person name="Aparicio A."/>
            <person name="Barrell B.G."/>
            <person name="Badcock K."/>
            <person name="Benes V."/>
            <person name="Botstein D."/>
            <person name="Bowman S."/>
            <person name="Brueckner M."/>
            <person name="Carpenter J."/>
            <person name="Cherry J.M."/>
            <person name="Chung E."/>
            <person name="Churcher C.M."/>
            <person name="Coster F."/>
            <person name="Davis K."/>
            <person name="Davis R.W."/>
            <person name="Dietrich F.S."/>
            <person name="Delius H."/>
            <person name="DiPaolo T."/>
            <person name="Dubois E."/>
            <person name="Duesterhoeft A."/>
            <person name="Duncan M."/>
            <person name="Floeth M."/>
            <person name="Fortin N."/>
            <person name="Friesen J.D."/>
            <person name="Fritz C."/>
            <person name="Goffeau A."/>
            <person name="Hall J."/>
            <person name="Hebling U."/>
            <person name="Heumann K."/>
            <person name="Hilbert H."/>
            <person name="Hillier L.W."/>
            <person name="Hunicke-Smith S."/>
            <person name="Hyman R.W."/>
            <person name="Johnston M."/>
            <person name="Kalman S."/>
            <person name="Kleine K."/>
            <person name="Komp C."/>
            <person name="Kurdi O."/>
            <person name="Lashkari D."/>
            <person name="Lew H."/>
            <person name="Lin A."/>
            <person name="Lin D."/>
            <person name="Louis E.J."/>
            <person name="Marathe R."/>
            <person name="Messenguy F."/>
            <person name="Mewes H.-W."/>
            <person name="Mirtipati S."/>
            <person name="Moestl D."/>
            <person name="Mueller-Auer S."/>
            <person name="Namath A."/>
            <person name="Nentwich U."/>
            <person name="Oefner P."/>
            <person name="Pearson D."/>
            <person name="Petel F.X."/>
            <person name="Pohl T.M."/>
            <person name="Purnelle B."/>
            <person name="Rajandream M.A."/>
            <person name="Rechmann S."/>
            <person name="Rieger M."/>
            <person name="Riles L."/>
            <person name="Roberts D."/>
            <person name="Schaefer M."/>
            <person name="Scharfe M."/>
            <person name="Scherens B."/>
            <person name="Schramm S."/>
            <person name="Schroeder M."/>
            <person name="Sdicu A.-M."/>
            <person name="Tettelin H."/>
            <person name="Urrestarazu L.A."/>
            <person name="Ushinsky S."/>
            <person name="Vierendeels F."/>
            <person name="Vissers S."/>
            <person name="Voss H."/>
            <person name="Walsh S.V."/>
            <person name="Wambutt R."/>
            <person name="Wang Y."/>
            <person name="Wedler E."/>
            <person name="Wedler H."/>
            <person name="Winnett E."/>
            <person name="Zhong W.-W."/>
            <person name="Zollner A."/>
            <person name="Vo D.H."/>
            <person name="Hani J."/>
        </authorList>
    </citation>
    <scope>NUCLEOTIDE SEQUENCE [LARGE SCALE GENOMIC DNA]</scope>
    <source>
        <strain>ATCC 204508 / S288c</strain>
    </source>
</reference>
<reference key="3">
    <citation type="journal article" date="2014" name="G3 (Bethesda)">
        <title>The reference genome sequence of Saccharomyces cerevisiae: Then and now.</title>
        <authorList>
            <person name="Engel S.R."/>
            <person name="Dietrich F.S."/>
            <person name="Fisk D.G."/>
            <person name="Binkley G."/>
            <person name="Balakrishnan R."/>
            <person name="Costanzo M.C."/>
            <person name="Dwight S.S."/>
            <person name="Hitz B.C."/>
            <person name="Karra K."/>
            <person name="Nash R.S."/>
            <person name="Weng S."/>
            <person name="Wong E.D."/>
            <person name="Lloyd P."/>
            <person name="Skrzypek M.S."/>
            <person name="Miyasato S.R."/>
            <person name="Simison M."/>
            <person name="Cherry J.M."/>
        </authorList>
    </citation>
    <scope>GENOME REANNOTATION</scope>
    <source>
        <strain>ATCC 204508 / S288c</strain>
    </source>
</reference>
<reference key="4">
    <citation type="journal article" date="1999" name="Proc. Natl. Acad. Sci. U.S.A.">
        <title>Global response of Saccharomyces cerevisiae to an alkylating agent.</title>
        <authorList>
            <person name="Jelinsky S.A."/>
            <person name="Samson L.D."/>
        </authorList>
    </citation>
    <scope>INDUCTION</scope>
</reference>
<reference key="5">
    <citation type="journal article" date="2007" name="J. Proteome Res.">
        <title>Large-scale phosphorylation analysis of alpha-factor-arrested Saccharomyces cerevisiae.</title>
        <authorList>
            <person name="Li X."/>
            <person name="Gerber S.A."/>
            <person name="Rudner A.D."/>
            <person name="Beausoleil S.A."/>
            <person name="Haas W."/>
            <person name="Villen J."/>
            <person name="Elias J.E."/>
            <person name="Gygi S.P."/>
        </authorList>
    </citation>
    <scope>PHOSPHORYLATION [LARGE SCALE ANALYSIS] AT SER-533</scope>
    <scope>IDENTIFICATION BY MASS SPECTROMETRY [LARGE SCALE ANALYSIS]</scope>
    <source>
        <strain>ADR376</strain>
    </source>
</reference>
<reference key="6">
    <citation type="journal article" date="2007" name="Proc. Natl. Acad. Sci. U.S.A.">
        <title>Analysis of phosphorylation sites on proteins from Saccharomyces cerevisiae by electron transfer dissociation (ETD) mass spectrometry.</title>
        <authorList>
            <person name="Chi A."/>
            <person name="Huttenhower C."/>
            <person name="Geer L.Y."/>
            <person name="Coon J.J."/>
            <person name="Syka J.E.P."/>
            <person name="Bai D.L."/>
            <person name="Shabanowitz J."/>
            <person name="Burke D.J."/>
            <person name="Troyanskaya O.G."/>
            <person name="Hunt D.F."/>
        </authorList>
    </citation>
    <scope>PHOSPHORYLATION [LARGE SCALE ANALYSIS] AT SER-456</scope>
    <scope>IDENTIFICATION BY MASS SPECTROMETRY [LARGE SCALE ANALYSIS]</scope>
</reference>
<reference key="7">
    <citation type="journal article" date="2008" name="Mol. Cell. Proteomics">
        <title>A multidimensional chromatography technology for in-depth phosphoproteome analysis.</title>
        <authorList>
            <person name="Albuquerque C.P."/>
            <person name="Smolka M.B."/>
            <person name="Payne S.H."/>
            <person name="Bafna V."/>
            <person name="Eng J."/>
            <person name="Zhou H."/>
        </authorList>
    </citation>
    <scope>PHOSPHORYLATION [LARGE SCALE ANALYSIS] AT SER-533</scope>
    <scope>IDENTIFICATION BY MASS SPECTROMETRY [LARGE SCALE ANALYSIS]</scope>
</reference>
<reference key="8">
    <citation type="journal article" date="2009" name="Science">
        <title>Global analysis of Cdk1 substrate phosphorylation sites provides insights into evolution.</title>
        <authorList>
            <person name="Holt L.J."/>
            <person name="Tuch B.B."/>
            <person name="Villen J."/>
            <person name="Johnson A.D."/>
            <person name="Gygi S.P."/>
            <person name="Morgan D.O."/>
        </authorList>
    </citation>
    <scope>PHOSPHORYLATION [LARGE SCALE ANALYSIS] AT SER-456 AND SER-533</scope>
    <scope>IDENTIFICATION BY MASS SPECTROMETRY [LARGE SCALE ANALYSIS]</scope>
</reference>
<accession>Q12152</accession>
<accession>D6W3L9</accession>
<protein>
    <recommendedName>
        <fullName>Putative serine/threonine-protein kinase YPL150W</fullName>
        <ecNumber>2.7.11.1</ecNumber>
    </recommendedName>
</protein>
<gene>
    <name type="ordered locus">YPL150W</name>
</gene>
<sequence>MVNPVGSSKLEQNNIKSIIGSSYNRLYSQFTSDELTEVGNYKILKQIGEGSFGKVYLALHRPTHRKVCLKTSDKNDPNIVREVFYHRQFDFPYITKLYEVIVTESKVWMALEYCPGKELYDHLLSLRRISLLECGELFAQISGAVYYAHSMHCVHRDLKLENILLDKNGNAKLTDFGFTRECMTKTTLETVCGTTVYMAPELIERRTYDGFKIDIWSLGVILYTLITGYLPFDDDDEAKTKWKIVNEEPKYDAKVIPDDARDLISRLLAKNPGERPSLSQVLRHPFLQPYGSVVLDQTQKILCRQRSGGTQFKSKLERRLLKRLKQSGVDTQAIKQSILKKKCDSLSGLWLLLLAQGKKQENCKYPKRSRSVLSVKKVIESATHNDTNGISEDVLKPSLELSRAASLSKMLNKGSDFVTSMTPVSRKKSKDSAKVLNPTLSKISSQRAYSHSIAGSPRKSNNFLQKVSSFFKSKKSSNSNSNNSIHTNVSESLIASNRGAPSSGSFLKKNSGSIQKSRTDTVANPSRTESIGSLNENVAGAIVPRSANNTTLENKKTSGNEIGLKVAPELLLNEHIRIEEPRLKRFKSSISSEISQTSTGNYDSESAENSRSISFDGKVSPPPIRNRPLSEISQISNDTYISEYSTDGNNSSFKISDTIKPSYIRKGSETTSQYSASSEKMTNGYGRKFVRRDLSIVSTASSTSERSSRTDSFYDITTATPVVTTDNRRNKNNNLKESVLPRFGTQRPWTGKRTYTTSRHGKNARRSSKRGLFKITSSNTDSIIQEVSSSEEEDHNVIYSKGKGLPTPVLQTKGLIENGLNERDEEGDDEYAIHTDGEFSIKPQFSDDVIDKQNHLPSVKAVATKRSLSEGSNWSSSYLDSDNNRRRVSSLLVEDGGNPTA</sequence>